<gene>
    <name type="primary">Cpe</name>
</gene>
<reference key="1">
    <citation type="journal article" date="1989" name="J. Biol. Chem.">
        <title>Rat preprocarboxypeptidase H. Cloning, characterization, and sequence of the cDNA and regulation of the mRNA by corticotropin-releasing factor.</title>
        <authorList>
            <person name="Rodriquez C."/>
            <person name="Brayton K.A."/>
            <person name="Brownstein M."/>
            <person name="Dixon J.E."/>
        </authorList>
    </citation>
    <scope>NUCLEOTIDE SEQUENCE [MRNA]</scope>
    <scope>TISSUE SPECIFICITY</scope>
</reference>
<reference key="2">
    <citation type="journal article" date="1989" name="Mol. Endocrinol.">
        <title>Isolation and sequence analysis of cDNA for rat carboxypeptidase E [EC 3.4.17.10], a neuropeptide processing enzyme.</title>
        <authorList>
            <person name="Fricker L.D."/>
            <person name="Adelman J.P."/>
            <person name="Douglass J."/>
            <person name="Thompsom R.C."/>
            <person name="von Strandmann R.P."/>
            <person name="Hutton J."/>
        </authorList>
    </citation>
    <scope>NUCLEOTIDE SEQUENCE [MRNA]</scope>
</reference>
<reference key="3">
    <citation type="journal article" date="1990" name="Biochem. J.">
        <title>Human carboxypeptidase E. Isolation and characterization of the cDNA, sequence conservation, expression and processing in vitro.</title>
        <authorList>
            <person name="Manser E."/>
            <person name="Fernandez D."/>
            <person name="Loo L."/>
            <person name="Goh P.Y."/>
            <person name="Monfries C."/>
            <person name="Hall C."/>
            <person name="Lim L."/>
        </authorList>
    </citation>
    <scope>NUCLEOTIDE SEQUENCE [MRNA]</scope>
    <source>
        <strain>Wistar</strain>
        <tissue>Brain</tissue>
    </source>
</reference>
<reference key="4">
    <citation type="journal article" date="1991" name="Mol. Endocrinol.">
        <title>Structural characterization of the rat carboxypeptidase-E gene.</title>
        <authorList>
            <person name="Jung Y.K."/>
            <person name="Kunczt C.J."/>
            <person name="Pearson R.K."/>
            <person name="Dixon J.E."/>
            <person name="Fricker L.D."/>
        </authorList>
    </citation>
    <scope>NUCLEOTIDE SEQUENCE [GENOMIC DNA]</scope>
</reference>
<reference key="5">
    <citation type="journal article" date="1991" name="J. Clin. Endocrinol. Metab.">
        <title>Identification and cloning of a granule autoantigen (carboxypeptidase-H) associated with type I diabetes.</title>
        <authorList>
            <person name="Castano L."/>
            <person name="Russo E."/>
            <person name="Zhou L."/>
            <person name="Lipes M.A."/>
            <person name="Eisenbarth G.S."/>
        </authorList>
    </citation>
    <scope>NUCLEOTIDE SEQUENCE OF 200-335</scope>
</reference>
<reference key="6">
    <citation type="journal article" date="2004" name="J. Biol. Chem.">
        <title>Secretogranin III binds to cholesterol in the secretory granule membrane as an adapter for chromogranin A.</title>
        <authorList>
            <person name="Hosaka M."/>
            <person name="Suda M."/>
            <person name="Sakai Y."/>
            <person name="Izumi T."/>
            <person name="Watanabe T."/>
            <person name="Takeuchi T."/>
        </authorList>
    </citation>
    <scope>SUBCELLULAR LOCATION</scope>
    <scope>LIPID RAFT-BINDING</scope>
</reference>
<reference key="7">
    <citation type="journal article" date="2013" name="J. Proteome Res.">
        <title>Site-specific glycan-peptide analysis for determination of N-glycoproteome heterogeneity.</title>
        <authorList>
            <person name="Parker B.L."/>
            <person name="Thaysen-Andersen M."/>
            <person name="Solis N."/>
            <person name="Scott N.E."/>
            <person name="Larsen M.R."/>
            <person name="Graham M.E."/>
            <person name="Packer N.H."/>
            <person name="Cordwell S.J."/>
        </authorList>
    </citation>
    <scope>GLYCOSYLATION [LARGE SCALE ANALYSIS] AT ASN-139 AND ASN-390</scope>
    <scope>IDENTIFICATION BY MASS SPECTROMETRY [LARGE SCALE ANALYSIS]</scope>
    <source>
        <tissue>Brain</tissue>
    </source>
</reference>
<comment type="function">
    <text evidence="2">Sorting receptor that directs prohormones to the regulated secretory pathway. Also acts as a prohormone processing enzyme in neuro/endocrine cells, removing dibasic residues from the C-terminal end of peptide hormone precursors after initial endoprotease cleavage.</text>
</comment>
<comment type="catalytic activity">
    <reaction>
        <text>Release of C-terminal arginine or lysine residues from polypeptides.</text>
        <dbReference type="EC" id="3.4.17.10"/>
    </reaction>
</comment>
<comment type="cofactor">
    <cofactor evidence="1">
        <name>Zn(2+)</name>
        <dbReference type="ChEBI" id="CHEBI:29105"/>
    </cofactor>
    <text evidence="1">Binds 1 zinc ion per subunit.</text>
</comment>
<comment type="subunit">
    <text evidence="2">Interacts with secretogranin III/SCG3.</text>
</comment>
<comment type="subcellular location">
    <subcellularLocation>
        <location evidence="4">Cytoplasmic vesicle</location>
        <location evidence="4">Secretory vesicle</location>
    </subcellularLocation>
    <subcellularLocation>
        <location evidence="4">Cytoplasmic vesicle</location>
        <location evidence="4">Secretory vesicle membrane</location>
        <topology evidence="4">Peripheral membrane protein</topology>
    </subcellularLocation>
    <subcellularLocation>
        <location evidence="4">Secreted</location>
    </subcellularLocation>
    <text evidence="4">Associated with the secretory granule membrane through direct binding to lipid rafts in intragranular conditions.</text>
</comment>
<comment type="tissue specificity">
    <text evidence="5">Expressed in brain, heart and anterior pituitary gland. Also expressed in pancreatic islets and adrenal gland.</text>
</comment>
<comment type="miscellaneous">
    <text>An autoantigen recognized by serum of pretype I diabetes.</text>
</comment>
<comment type="similarity">
    <text evidence="6">Belongs to the peptidase M14 family.</text>
</comment>
<feature type="signal peptide" description="Or 34">
    <location>
        <begin position="1"/>
        <end position="27"/>
    </location>
</feature>
<feature type="propeptide" id="PRO_0000004388" description="Activation peptide">
    <location>
        <begin position="28"/>
        <end position="42"/>
    </location>
</feature>
<feature type="chain" id="PRO_0000004389" description="Carboxypeptidase E">
    <location>
        <begin position="43"/>
        <end position="476"/>
    </location>
</feature>
<feature type="domain" description="Peptidase M14" evidence="3">
    <location>
        <begin position="52"/>
        <end position="372"/>
    </location>
</feature>
<feature type="active site" description="Proton donor/acceptor" evidence="3">
    <location>
        <position position="342"/>
    </location>
</feature>
<feature type="binding site" evidence="3">
    <location>
        <position position="114"/>
    </location>
    <ligand>
        <name>Zn(2+)</name>
        <dbReference type="ChEBI" id="CHEBI:29105"/>
        <note>catalytic</note>
    </ligand>
</feature>
<feature type="binding site" evidence="3">
    <location>
        <position position="117"/>
    </location>
    <ligand>
        <name>Zn(2+)</name>
        <dbReference type="ChEBI" id="CHEBI:29105"/>
        <note>catalytic</note>
    </ligand>
</feature>
<feature type="binding site" evidence="3">
    <location>
        <position position="248"/>
    </location>
    <ligand>
        <name>Zn(2+)</name>
        <dbReference type="ChEBI" id="CHEBI:29105"/>
        <note>catalytic</note>
    </ligand>
</feature>
<feature type="glycosylation site" description="N-linked (GlcNAc...) asparagine" evidence="7">
    <location>
        <position position="139"/>
    </location>
</feature>
<feature type="glycosylation site" description="N-linked (GlcNAc...) asparagine" evidence="7">
    <location>
        <position position="390"/>
    </location>
</feature>
<feature type="sequence conflict" description="In Ref. 2; AAA40873." evidence="6" ref="2">
    <original>S</original>
    <variation>T</variation>
    <location>
        <position position="82"/>
    </location>
</feature>
<feature type="sequence conflict" description="In Ref. 3; CAA35768." evidence="6" ref="3">
    <original>V</original>
    <variation>A</variation>
    <location>
        <position position="415"/>
    </location>
</feature>
<feature type="sequence conflict" description="In Ref. 3; CAA35768." evidence="6" ref="3">
    <original>S</original>
    <variation>Y</variation>
    <location>
        <position position="453"/>
    </location>
</feature>
<protein>
    <recommendedName>
        <fullName>Carboxypeptidase E</fullName>
        <shortName>CPE</shortName>
        <ecNumber>3.4.17.10</ecNumber>
    </recommendedName>
    <alternativeName>
        <fullName>Carboxypeptidase H</fullName>
        <shortName>CPH</shortName>
    </alternativeName>
    <alternativeName>
        <fullName>Enkephalin convertase</fullName>
    </alternativeName>
    <alternativeName>
        <fullName>Prohormone-processing carboxypeptidase</fullName>
    </alternativeName>
</protein>
<evidence type="ECO:0000250" key="1">
    <source>
        <dbReference type="UniProtKB" id="P00730"/>
    </source>
</evidence>
<evidence type="ECO:0000250" key="2">
    <source>
        <dbReference type="UniProtKB" id="Q00493"/>
    </source>
</evidence>
<evidence type="ECO:0000255" key="3">
    <source>
        <dbReference type="PROSITE-ProRule" id="PRU01379"/>
    </source>
</evidence>
<evidence type="ECO:0000269" key="4">
    <source>
    </source>
</evidence>
<evidence type="ECO:0000269" key="5">
    <source>
    </source>
</evidence>
<evidence type="ECO:0000305" key="6"/>
<evidence type="ECO:0007744" key="7">
    <source>
    </source>
</evidence>
<accession>P15087</accession>
<sequence length="476" mass="53309">MAGRGGRVLLALCAALVAGGWLLAAEAQEPGAPAAGMRRRRRLQQEDGISFEYHRYPELREALVSVWLQCTAISRIYTVGRSFEGRELLVIELSDNPGVHEPGEPEFKYIGNMHGNEAVGRELLIFLAQYLCNEYQRGNETIVNLIHSTRIHIMPSLNPDGFEKAASQPGELKDWFVGRSNAQGIDLNRNFPDLDRIVYVNEKEGGPNNHLLKNLKKIVDQNSKLAPETKAVIHWIMDIPFVLSANLHGGDLVANYPYDETRSGTAHEYSSCPDDAIFQSLARAYSSFNPVMSDPNRPPCRKNDDDSSFVDGTTNGGAWYSVPGGMQDFNYLSSNCFEITVELSCEKFPPEETLKSYWEDNKNSLINYLEQIHRGVKGFVRDLQGNPIANATISVDGIDHDVTSAKDGDYWRLLVPGNYKLTASAPGYLAITKKVAVPFSPAVGVDFELESFSERKEEEKEELMEWWKMMSETLNF</sequence>
<keyword id="KW-0121">Carboxypeptidase</keyword>
<keyword id="KW-0165">Cleavage on pair of basic residues</keyword>
<keyword id="KW-0968">Cytoplasmic vesicle</keyword>
<keyword id="KW-0325">Glycoprotein</keyword>
<keyword id="KW-0378">Hydrolase</keyword>
<keyword id="KW-0472">Membrane</keyword>
<keyword id="KW-0479">Metal-binding</keyword>
<keyword id="KW-0482">Metalloprotease</keyword>
<keyword id="KW-0645">Protease</keyword>
<keyword id="KW-1185">Reference proteome</keyword>
<keyword id="KW-0964">Secreted</keyword>
<keyword id="KW-0732">Signal</keyword>
<keyword id="KW-0862">Zinc</keyword>
<keyword id="KW-0865">Zymogen</keyword>
<proteinExistence type="evidence at protein level"/>
<organism>
    <name type="scientific">Rattus norvegicus</name>
    <name type="common">Rat</name>
    <dbReference type="NCBI Taxonomy" id="10116"/>
    <lineage>
        <taxon>Eukaryota</taxon>
        <taxon>Metazoa</taxon>
        <taxon>Chordata</taxon>
        <taxon>Craniata</taxon>
        <taxon>Vertebrata</taxon>
        <taxon>Euteleostomi</taxon>
        <taxon>Mammalia</taxon>
        <taxon>Eutheria</taxon>
        <taxon>Euarchontoglires</taxon>
        <taxon>Glires</taxon>
        <taxon>Rodentia</taxon>
        <taxon>Myomorpha</taxon>
        <taxon>Muroidea</taxon>
        <taxon>Muridae</taxon>
        <taxon>Murinae</taxon>
        <taxon>Rattus</taxon>
    </lineage>
</organism>
<dbReference type="EC" id="3.4.17.10"/>
<dbReference type="EMBL" id="J04625">
    <property type="protein sequence ID" value="AAA40875.1"/>
    <property type="molecule type" value="mRNA"/>
</dbReference>
<dbReference type="EMBL" id="M31602">
    <property type="protein sequence ID" value="AAA40873.1"/>
    <property type="molecule type" value="mRNA"/>
</dbReference>
<dbReference type="EMBL" id="X51406">
    <property type="protein sequence ID" value="CAA35768.1"/>
    <property type="molecule type" value="mRNA"/>
</dbReference>
<dbReference type="EMBL" id="L07281">
    <property type="protein sequence ID" value="AAA40957.1"/>
    <property type="status" value="ALT_SEQ"/>
    <property type="molecule type" value="Genomic_DNA"/>
</dbReference>
<dbReference type="EMBL" id="L07273">
    <property type="protein sequence ID" value="AAA40957.1"/>
    <property type="status" value="JOINED"/>
    <property type="molecule type" value="Genomic_DNA"/>
</dbReference>
<dbReference type="EMBL" id="L07274">
    <property type="protein sequence ID" value="AAA40957.1"/>
    <property type="status" value="JOINED"/>
    <property type="molecule type" value="Genomic_DNA"/>
</dbReference>
<dbReference type="EMBL" id="L07275">
    <property type="protein sequence ID" value="AAA40957.1"/>
    <property type="status" value="JOINED"/>
    <property type="molecule type" value="Genomic_DNA"/>
</dbReference>
<dbReference type="EMBL" id="L07277">
    <property type="protein sequence ID" value="AAA40957.1"/>
    <property type="status" value="JOINED"/>
    <property type="molecule type" value="Genomic_DNA"/>
</dbReference>
<dbReference type="EMBL" id="L07278">
    <property type="protein sequence ID" value="AAA40957.1"/>
    <property type="status" value="JOINED"/>
    <property type="molecule type" value="Genomic_DNA"/>
</dbReference>
<dbReference type="EMBL" id="L07279">
    <property type="protein sequence ID" value="AAA40957.1"/>
    <property type="status" value="JOINED"/>
    <property type="molecule type" value="Genomic_DNA"/>
</dbReference>
<dbReference type="EMBL" id="L07280">
    <property type="protein sequence ID" value="AAA40957.1"/>
    <property type="status" value="JOINED"/>
    <property type="molecule type" value="Genomic_DNA"/>
</dbReference>
<dbReference type="PIR" id="A40469">
    <property type="entry name" value="A40469"/>
</dbReference>
<dbReference type="PIR" id="S12461">
    <property type="entry name" value="S12461"/>
</dbReference>
<dbReference type="RefSeq" id="NP_037260.1">
    <property type="nucleotide sequence ID" value="NM_013128.1"/>
</dbReference>
<dbReference type="SMR" id="P15087"/>
<dbReference type="BioGRID" id="247698">
    <property type="interactions" value="3"/>
</dbReference>
<dbReference type="FunCoup" id="P15087">
    <property type="interactions" value="1335"/>
</dbReference>
<dbReference type="STRING" id="10116.ENSRNOP00000061172"/>
<dbReference type="MEROPS" id="M14.005"/>
<dbReference type="GlyCosmos" id="P15087">
    <property type="glycosylation" value="2 sites, 10 glycans"/>
</dbReference>
<dbReference type="GlyGen" id="P15087">
    <property type="glycosylation" value="2 sites, 10 N-linked glycans (2 sites)"/>
</dbReference>
<dbReference type="iPTMnet" id="P15087"/>
<dbReference type="PhosphoSitePlus" id="P15087"/>
<dbReference type="jPOST" id="P15087"/>
<dbReference type="GeneID" id="25669"/>
<dbReference type="KEGG" id="rno:25669"/>
<dbReference type="AGR" id="RGD:2394"/>
<dbReference type="CTD" id="1363"/>
<dbReference type="RGD" id="2394">
    <property type="gene designation" value="Cpe"/>
</dbReference>
<dbReference type="InParanoid" id="P15087"/>
<dbReference type="OrthoDB" id="10249045at2759"/>
<dbReference type="PhylomeDB" id="P15087"/>
<dbReference type="PRO" id="PR:P15087"/>
<dbReference type="Proteomes" id="UP000002494">
    <property type="component" value="Unplaced"/>
</dbReference>
<dbReference type="GO" id="GO:0030425">
    <property type="term" value="C:dendrite"/>
    <property type="evidence" value="ECO:0000314"/>
    <property type="project" value="BHF-UCL"/>
</dbReference>
<dbReference type="GO" id="GO:0031045">
    <property type="term" value="C:dense core granule"/>
    <property type="evidence" value="ECO:0000314"/>
    <property type="project" value="RGD"/>
</dbReference>
<dbReference type="GO" id="GO:0005576">
    <property type="term" value="C:extracellular region"/>
    <property type="evidence" value="ECO:0000314"/>
    <property type="project" value="RGD"/>
</dbReference>
<dbReference type="GO" id="GO:0005615">
    <property type="term" value="C:extracellular space"/>
    <property type="evidence" value="ECO:0000314"/>
    <property type="project" value="RGD"/>
</dbReference>
<dbReference type="GO" id="GO:0005794">
    <property type="term" value="C:Golgi apparatus"/>
    <property type="evidence" value="ECO:0000314"/>
    <property type="project" value="BHF-UCL"/>
</dbReference>
<dbReference type="GO" id="GO:0043025">
    <property type="term" value="C:neuronal cell body"/>
    <property type="evidence" value="ECO:0000314"/>
    <property type="project" value="RGD"/>
</dbReference>
<dbReference type="GO" id="GO:0005634">
    <property type="term" value="C:nucleus"/>
    <property type="evidence" value="ECO:0000314"/>
    <property type="project" value="RGD"/>
</dbReference>
<dbReference type="GO" id="GO:0043204">
    <property type="term" value="C:perikaryon"/>
    <property type="evidence" value="ECO:0000314"/>
    <property type="project" value="BHF-UCL"/>
</dbReference>
<dbReference type="GO" id="GO:0030141">
    <property type="term" value="C:secretory granule"/>
    <property type="evidence" value="ECO:0000314"/>
    <property type="project" value="RGD"/>
</dbReference>
<dbReference type="GO" id="GO:0030667">
    <property type="term" value="C:secretory granule membrane"/>
    <property type="evidence" value="ECO:0000266"/>
    <property type="project" value="RGD"/>
</dbReference>
<dbReference type="GO" id="GO:0097060">
    <property type="term" value="C:synaptic membrane"/>
    <property type="evidence" value="ECO:0000314"/>
    <property type="project" value="RGD"/>
</dbReference>
<dbReference type="GO" id="GO:0030658">
    <property type="term" value="C:transport vesicle membrane"/>
    <property type="evidence" value="ECO:0007669"/>
    <property type="project" value="UniProtKB-SubCell"/>
</dbReference>
<dbReference type="GO" id="GO:0004180">
    <property type="term" value="F:carboxypeptidase activity"/>
    <property type="evidence" value="ECO:0000314"/>
    <property type="project" value="RGD"/>
</dbReference>
<dbReference type="GO" id="GO:0050839">
    <property type="term" value="F:cell adhesion molecule binding"/>
    <property type="evidence" value="ECO:0000266"/>
    <property type="project" value="RGD"/>
</dbReference>
<dbReference type="GO" id="GO:0050897">
    <property type="term" value="F:cobalt ion binding"/>
    <property type="evidence" value="ECO:0000315"/>
    <property type="project" value="RGD"/>
</dbReference>
<dbReference type="GO" id="GO:0004181">
    <property type="term" value="F:metallocarboxypeptidase activity"/>
    <property type="evidence" value="ECO:0000266"/>
    <property type="project" value="RGD"/>
</dbReference>
<dbReference type="GO" id="GO:0042043">
    <property type="term" value="F:neurexin family protein binding"/>
    <property type="evidence" value="ECO:0000266"/>
    <property type="project" value="RGD"/>
</dbReference>
<dbReference type="GO" id="GO:0019904">
    <property type="term" value="F:protein domain specific binding"/>
    <property type="evidence" value="ECO:0000314"/>
    <property type="project" value="RGD"/>
</dbReference>
<dbReference type="GO" id="GO:0008270">
    <property type="term" value="F:zinc ion binding"/>
    <property type="evidence" value="ECO:0007669"/>
    <property type="project" value="InterPro"/>
</dbReference>
<dbReference type="GO" id="GO:0003214">
    <property type="term" value="P:cardiac left ventricle morphogenesis"/>
    <property type="evidence" value="ECO:0000266"/>
    <property type="project" value="RGD"/>
</dbReference>
<dbReference type="GO" id="GO:0071549">
    <property type="term" value="P:cellular response to dexamethasone stimulus"/>
    <property type="evidence" value="ECO:0000315"/>
    <property type="project" value="RGD"/>
</dbReference>
<dbReference type="GO" id="GO:0070301">
    <property type="term" value="P:cellular response to hydrogen peroxide"/>
    <property type="evidence" value="ECO:0000315"/>
    <property type="project" value="RGD"/>
</dbReference>
<dbReference type="GO" id="GO:0072734">
    <property type="term" value="P:cellular response to staurosporine"/>
    <property type="evidence" value="ECO:0000315"/>
    <property type="project" value="RGD"/>
</dbReference>
<dbReference type="GO" id="GO:0034230">
    <property type="term" value="P:enkephalin processing"/>
    <property type="evidence" value="ECO:0000314"/>
    <property type="project" value="RGD"/>
</dbReference>
<dbReference type="GO" id="GO:0030070">
    <property type="term" value="P:insulin processing"/>
    <property type="evidence" value="ECO:0000314"/>
    <property type="project" value="RGD"/>
</dbReference>
<dbReference type="GO" id="GO:0035773">
    <property type="term" value="P:insulin secretion involved in cellular response to glucose stimulus"/>
    <property type="evidence" value="ECO:0000315"/>
    <property type="project" value="RGD"/>
</dbReference>
<dbReference type="GO" id="GO:2000173">
    <property type="term" value="P:negative regulation of branching morphogenesis of a nerve"/>
    <property type="evidence" value="ECO:0000315"/>
    <property type="project" value="RGD"/>
</dbReference>
<dbReference type="GO" id="GO:1903377">
    <property type="term" value="P:negative regulation of oxidative stress-induced neuron intrinsic apoptotic signaling pathway"/>
    <property type="evidence" value="ECO:0000315"/>
    <property type="project" value="RGD"/>
</dbReference>
<dbReference type="GO" id="GO:0001764">
    <property type="term" value="P:neuron migration"/>
    <property type="evidence" value="ECO:0000315"/>
    <property type="project" value="RGD"/>
</dbReference>
<dbReference type="GO" id="GO:0140058">
    <property type="term" value="P:neuron projection arborization"/>
    <property type="evidence" value="ECO:0000315"/>
    <property type="project" value="RGD"/>
</dbReference>
<dbReference type="GO" id="GO:0043171">
    <property type="term" value="P:peptide catabolic process"/>
    <property type="evidence" value="ECO:0000314"/>
    <property type="project" value="RGD"/>
</dbReference>
<dbReference type="GO" id="GO:0016486">
    <property type="term" value="P:peptide hormone processing"/>
    <property type="evidence" value="ECO:0000304"/>
    <property type="project" value="RGD"/>
</dbReference>
<dbReference type="GO" id="GO:0030072">
    <property type="term" value="P:peptide hormone secretion"/>
    <property type="evidence" value="ECO:0000266"/>
    <property type="project" value="RGD"/>
</dbReference>
<dbReference type="GO" id="GO:0006518">
    <property type="term" value="P:peptide metabolic process"/>
    <property type="evidence" value="ECO:0000314"/>
    <property type="project" value="RGD"/>
</dbReference>
<dbReference type="GO" id="GO:0072657">
    <property type="term" value="P:protein localization to membrane"/>
    <property type="evidence" value="ECO:0000266"/>
    <property type="project" value="RGD"/>
</dbReference>
<dbReference type="GO" id="GO:0033366">
    <property type="term" value="P:protein localization to secretory granule"/>
    <property type="evidence" value="ECO:0000266"/>
    <property type="project" value="RGD"/>
</dbReference>
<dbReference type="GO" id="GO:0016485">
    <property type="term" value="P:protein processing"/>
    <property type="evidence" value="ECO:0000314"/>
    <property type="project" value="RGD"/>
</dbReference>
<dbReference type="GO" id="GO:0016055">
    <property type="term" value="P:Wnt signaling pathway"/>
    <property type="evidence" value="ECO:0000266"/>
    <property type="project" value="RGD"/>
</dbReference>
<dbReference type="CDD" id="cd03865">
    <property type="entry name" value="M14_CPE"/>
    <property type="match status" value="1"/>
</dbReference>
<dbReference type="CDD" id="cd11308">
    <property type="entry name" value="Peptidase_M14NE-CP-C_like"/>
    <property type="match status" value="1"/>
</dbReference>
<dbReference type="FunFam" id="2.60.40.1120:FF:000004">
    <property type="entry name" value="Carboxypeptidase E"/>
    <property type="match status" value="1"/>
</dbReference>
<dbReference type="FunFam" id="3.40.630.10:FF:000013">
    <property type="entry name" value="carboxypeptidase N catalytic chain"/>
    <property type="match status" value="1"/>
</dbReference>
<dbReference type="Gene3D" id="2.60.40.1120">
    <property type="entry name" value="Carboxypeptidase-like, regulatory domain"/>
    <property type="match status" value="1"/>
</dbReference>
<dbReference type="Gene3D" id="3.40.630.10">
    <property type="entry name" value="Zn peptidases"/>
    <property type="match status" value="1"/>
</dbReference>
<dbReference type="InterPro" id="IPR008969">
    <property type="entry name" value="CarboxyPept-like_regulatory"/>
</dbReference>
<dbReference type="InterPro" id="IPR034232">
    <property type="entry name" value="M14_CPE_CPD"/>
</dbReference>
<dbReference type="InterPro" id="IPR000834">
    <property type="entry name" value="Peptidase_M14"/>
</dbReference>
<dbReference type="InterPro" id="IPR050753">
    <property type="entry name" value="Peptidase_M14_domain"/>
</dbReference>
<dbReference type="PANTHER" id="PTHR11532:SF92">
    <property type="entry name" value="CARBOXYPEPTIDASE E"/>
    <property type="match status" value="1"/>
</dbReference>
<dbReference type="PANTHER" id="PTHR11532">
    <property type="entry name" value="PROTEASE M14 CARBOXYPEPTIDASE"/>
    <property type="match status" value="1"/>
</dbReference>
<dbReference type="Pfam" id="PF13620">
    <property type="entry name" value="CarboxypepD_reg"/>
    <property type="match status" value="1"/>
</dbReference>
<dbReference type="Pfam" id="PF00246">
    <property type="entry name" value="Peptidase_M14"/>
    <property type="match status" value="1"/>
</dbReference>
<dbReference type="PRINTS" id="PR00765">
    <property type="entry name" value="CRBOXYPTASEA"/>
</dbReference>
<dbReference type="SMART" id="SM00631">
    <property type="entry name" value="Zn_pept"/>
    <property type="match status" value="1"/>
</dbReference>
<dbReference type="SUPFAM" id="SSF49464">
    <property type="entry name" value="Carboxypeptidase regulatory domain-like"/>
    <property type="match status" value="1"/>
</dbReference>
<dbReference type="SUPFAM" id="SSF53187">
    <property type="entry name" value="Zn-dependent exopeptidases"/>
    <property type="match status" value="1"/>
</dbReference>
<dbReference type="PROSITE" id="PS00132">
    <property type="entry name" value="CARBOXYPEPT_ZN_1"/>
    <property type="match status" value="1"/>
</dbReference>
<dbReference type="PROSITE" id="PS00133">
    <property type="entry name" value="CARBOXYPEPT_ZN_2"/>
    <property type="match status" value="1"/>
</dbReference>
<dbReference type="PROSITE" id="PS52035">
    <property type="entry name" value="PEPTIDASE_M14"/>
    <property type="match status" value="1"/>
</dbReference>
<name>CBPE_RAT</name>